<dbReference type="EC" id="2.7.7.72" evidence="1"/>
<dbReference type="EMBL" id="CP000557">
    <property type="protein sequence ID" value="ABO67467.1"/>
    <property type="molecule type" value="Genomic_DNA"/>
</dbReference>
<dbReference type="RefSeq" id="WP_008879589.1">
    <property type="nucleotide sequence ID" value="NC_009328.1"/>
</dbReference>
<dbReference type="SMR" id="A4IQ63"/>
<dbReference type="GeneID" id="87623785"/>
<dbReference type="KEGG" id="gtn:GTNG_2115"/>
<dbReference type="eggNOG" id="COG0617">
    <property type="taxonomic scope" value="Bacteria"/>
</dbReference>
<dbReference type="HOGENOM" id="CLU_015961_3_0_9"/>
<dbReference type="Proteomes" id="UP000001578">
    <property type="component" value="Chromosome"/>
</dbReference>
<dbReference type="GO" id="GO:0005524">
    <property type="term" value="F:ATP binding"/>
    <property type="evidence" value="ECO:0007669"/>
    <property type="project" value="UniProtKB-UniRule"/>
</dbReference>
<dbReference type="GO" id="GO:0004810">
    <property type="term" value="F:CCA tRNA nucleotidyltransferase activity"/>
    <property type="evidence" value="ECO:0007669"/>
    <property type="project" value="UniProtKB-UniRule"/>
</dbReference>
<dbReference type="GO" id="GO:0000287">
    <property type="term" value="F:magnesium ion binding"/>
    <property type="evidence" value="ECO:0007669"/>
    <property type="project" value="UniProtKB-UniRule"/>
</dbReference>
<dbReference type="GO" id="GO:0000049">
    <property type="term" value="F:tRNA binding"/>
    <property type="evidence" value="ECO:0007669"/>
    <property type="project" value="UniProtKB-UniRule"/>
</dbReference>
<dbReference type="GO" id="GO:0042245">
    <property type="term" value="P:RNA repair"/>
    <property type="evidence" value="ECO:0007669"/>
    <property type="project" value="UniProtKB-KW"/>
</dbReference>
<dbReference type="GO" id="GO:0001680">
    <property type="term" value="P:tRNA 3'-terminal CCA addition"/>
    <property type="evidence" value="ECO:0007669"/>
    <property type="project" value="UniProtKB-UniRule"/>
</dbReference>
<dbReference type="CDD" id="cd05398">
    <property type="entry name" value="NT_ClassII-CCAase"/>
    <property type="match status" value="1"/>
</dbReference>
<dbReference type="Gene3D" id="1.10.110.30">
    <property type="match status" value="1"/>
</dbReference>
<dbReference type="Gene3D" id="1.10.246.80">
    <property type="match status" value="1"/>
</dbReference>
<dbReference type="Gene3D" id="1.20.58.560">
    <property type="match status" value="1"/>
</dbReference>
<dbReference type="Gene3D" id="3.30.460.10">
    <property type="entry name" value="Beta Polymerase, domain 2"/>
    <property type="match status" value="1"/>
</dbReference>
<dbReference type="HAMAP" id="MF_01263">
    <property type="entry name" value="CCA_bact_type3"/>
    <property type="match status" value="1"/>
</dbReference>
<dbReference type="InterPro" id="IPR050264">
    <property type="entry name" value="Bact_CCA-adding_enz_type3_sf"/>
</dbReference>
<dbReference type="InterPro" id="IPR032810">
    <property type="entry name" value="CCA-adding_enz_C"/>
</dbReference>
<dbReference type="InterPro" id="IPR023068">
    <property type="entry name" value="CCA-adding_enz_firmicutes"/>
</dbReference>
<dbReference type="InterPro" id="IPR043519">
    <property type="entry name" value="NT_sf"/>
</dbReference>
<dbReference type="InterPro" id="IPR002646">
    <property type="entry name" value="PolA_pol_head_dom"/>
</dbReference>
<dbReference type="InterPro" id="IPR032828">
    <property type="entry name" value="PolyA_RNA-bd"/>
</dbReference>
<dbReference type="NCBIfam" id="NF009814">
    <property type="entry name" value="PRK13299.1"/>
    <property type="match status" value="1"/>
</dbReference>
<dbReference type="PANTHER" id="PTHR46173">
    <property type="entry name" value="CCA TRNA NUCLEOTIDYLTRANSFERASE 1, MITOCHONDRIAL"/>
    <property type="match status" value="1"/>
</dbReference>
<dbReference type="PANTHER" id="PTHR46173:SF1">
    <property type="entry name" value="CCA TRNA NUCLEOTIDYLTRANSFERASE 1, MITOCHONDRIAL"/>
    <property type="match status" value="1"/>
</dbReference>
<dbReference type="Pfam" id="PF01743">
    <property type="entry name" value="PolyA_pol"/>
    <property type="match status" value="1"/>
</dbReference>
<dbReference type="Pfam" id="PF12627">
    <property type="entry name" value="PolyA_pol_RNAbd"/>
    <property type="match status" value="1"/>
</dbReference>
<dbReference type="Pfam" id="PF13735">
    <property type="entry name" value="tRNA_NucTran2_2"/>
    <property type="match status" value="1"/>
</dbReference>
<dbReference type="SUPFAM" id="SSF81301">
    <property type="entry name" value="Nucleotidyltransferase"/>
    <property type="match status" value="1"/>
</dbReference>
<dbReference type="SUPFAM" id="SSF81891">
    <property type="entry name" value="Poly A polymerase C-terminal region-like"/>
    <property type="match status" value="1"/>
</dbReference>
<protein>
    <recommendedName>
        <fullName evidence="1">CCA-adding enzyme</fullName>
        <ecNumber evidence="1">2.7.7.72</ecNumber>
    </recommendedName>
    <alternativeName>
        <fullName evidence="1">CCA tRNA nucleotidyltransferase</fullName>
    </alternativeName>
    <alternativeName>
        <fullName evidence="1">tRNA CCA-pyrophosphorylase</fullName>
    </alternativeName>
    <alternativeName>
        <fullName evidence="1">tRNA adenylyl-/cytidylyl- transferase</fullName>
    </alternativeName>
    <alternativeName>
        <fullName evidence="1">tRNA nucleotidyltransferase</fullName>
    </alternativeName>
    <alternativeName>
        <fullName evidence="1">tRNA-NT</fullName>
    </alternativeName>
</protein>
<keyword id="KW-0067">ATP-binding</keyword>
<keyword id="KW-0460">Magnesium</keyword>
<keyword id="KW-0479">Metal-binding</keyword>
<keyword id="KW-0547">Nucleotide-binding</keyword>
<keyword id="KW-0548">Nucleotidyltransferase</keyword>
<keyword id="KW-0692">RNA repair</keyword>
<keyword id="KW-0694">RNA-binding</keyword>
<keyword id="KW-0808">Transferase</keyword>
<keyword id="KW-0819">tRNA processing</keyword>
<accession>A4IQ63</accession>
<proteinExistence type="inferred from homology"/>
<gene>
    <name evidence="1" type="primary">cca</name>
    <name type="ordered locus">GTNG_2115</name>
</gene>
<evidence type="ECO:0000255" key="1">
    <source>
        <dbReference type="HAMAP-Rule" id="MF_01263"/>
    </source>
</evidence>
<name>CCA_GEOTN</name>
<comment type="function">
    <text evidence="1">Catalyzes the addition and repair of the essential 3'-terminal CCA sequence in tRNAs without using a nucleic acid template. Adds these three nucleotides in the order of C, C, and A to the tRNA nucleotide-73, using CTP and ATP as substrates and producing inorganic pyrophosphate. tRNA 3'-terminal CCA addition is required both for tRNA processing and repair. Also involved in tRNA surveillance by mediating tandem CCA addition to generate a CCACCA at the 3' terminus of unstable tRNAs. While stable tRNAs receive only 3'-terminal CCA, unstable tRNAs are marked with CCACCA and rapidly degraded.</text>
</comment>
<comment type="catalytic activity">
    <reaction evidence="1">
        <text>a tRNA precursor + 2 CTP + ATP = a tRNA with a 3' CCA end + 3 diphosphate</text>
        <dbReference type="Rhea" id="RHEA:14433"/>
        <dbReference type="Rhea" id="RHEA-COMP:10465"/>
        <dbReference type="Rhea" id="RHEA-COMP:10468"/>
        <dbReference type="ChEBI" id="CHEBI:30616"/>
        <dbReference type="ChEBI" id="CHEBI:33019"/>
        <dbReference type="ChEBI" id="CHEBI:37563"/>
        <dbReference type="ChEBI" id="CHEBI:74896"/>
        <dbReference type="ChEBI" id="CHEBI:83071"/>
        <dbReference type="EC" id="2.7.7.72"/>
    </reaction>
</comment>
<comment type="catalytic activity">
    <reaction evidence="1">
        <text>a tRNA with a 3' CCA end + 2 CTP + ATP = a tRNA with a 3' CCACCA end + 3 diphosphate</text>
        <dbReference type="Rhea" id="RHEA:76235"/>
        <dbReference type="Rhea" id="RHEA-COMP:10468"/>
        <dbReference type="Rhea" id="RHEA-COMP:18655"/>
        <dbReference type="ChEBI" id="CHEBI:30616"/>
        <dbReference type="ChEBI" id="CHEBI:33019"/>
        <dbReference type="ChEBI" id="CHEBI:37563"/>
        <dbReference type="ChEBI" id="CHEBI:83071"/>
        <dbReference type="ChEBI" id="CHEBI:195187"/>
    </reaction>
    <physiologicalReaction direction="left-to-right" evidence="1">
        <dbReference type="Rhea" id="RHEA:76236"/>
    </physiologicalReaction>
</comment>
<comment type="cofactor">
    <cofactor evidence="1">
        <name>Mg(2+)</name>
        <dbReference type="ChEBI" id="CHEBI:18420"/>
    </cofactor>
</comment>
<comment type="subunit">
    <text evidence="1">Homodimer.</text>
</comment>
<comment type="miscellaneous">
    <text evidence="1">A single active site specifically recognizes both ATP and CTP and is responsible for their addition.</text>
</comment>
<comment type="similarity">
    <text evidence="1">Belongs to the tRNA nucleotidyltransferase/poly(A) polymerase family. Bacterial CCA-adding enzyme type 3 subfamily.</text>
</comment>
<reference key="1">
    <citation type="journal article" date="2007" name="Proc. Natl. Acad. Sci. U.S.A.">
        <title>Genome and proteome of long-chain alkane degrading Geobacillus thermodenitrificans NG80-2 isolated from a deep-subsurface oil reservoir.</title>
        <authorList>
            <person name="Feng L."/>
            <person name="Wang W."/>
            <person name="Cheng J."/>
            <person name="Ren Y."/>
            <person name="Zhao G."/>
            <person name="Gao C."/>
            <person name="Tang Y."/>
            <person name="Liu X."/>
            <person name="Han W."/>
            <person name="Peng X."/>
            <person name="Liu R."/>
            <person name="Wang L."/>
        </authorList>
    </citation>
    <scope>NUCLEOTIDE SEQUENCE [LARGE SCALE GENOMIC DNA]</scope>
    <source>
        <strain>NG80-2</strain>
    </source>
</reference>
<sequence length="404" mass="45226">MKPPFQQALGIIRQLNRHGYEAYFVGGAVRDLLLGRPIGDVDIATSALPDEVMAIFPKTIDVGSKHGTVVVVHEGTAYEVTTFRTDGDYEDHRRPESVTFVRSLEEDLKRRDFTMNAIAMDEHGTIIDPFGGQEAIEKRLIRTVGEADARFREDALRMMRAVRFVSQLGFSLAIDTKKAIIANAPLLAHISVERMTMEMEKLLAGPFAAEALPLLAETGLSTYLPGLAEKGEWLRRAAAYRWPWLAAREERWALLCHALGVKESRPFLRAWKLPNKVIDEAGAILATLAAVPEPAAWTNEQLFLAGLKRALSVEVVRAALTGKPYEPQHDELRRRFAALPIKTKGELAVNGKVVIDWIGKPAGPWVKETLDAIWRAVVNGEVENEKERIYAWLMERSRTQEKNC</sequence>
<organism>
    <name type="scientific">Geobacillus thermodenitrificans (strain NG80-2)</name>
    <dbReference type="NCBI Taxonomy" id="420246"/>
    <lineage>
        <taxon>Bacteria</taxon>
        <taxon>Bacillati</taxon>
        <taxon>Bacillota</taxon>
        <taxon>Bacilli</taxon>
        <taxon>Bacillales</taxon>
        <taxon>Anoxybacillaceae</taxon>
        <taxon>Geobacillus</taxon>
    </lineage>
</organism>
<feature type="chain" id="PRO_1000054322" description="CCA-adding enzyme">
    <location>
        <begin position="1"/>
        <end position="404"/>
    </location>
</feature>
<feature type="binding site" evidence="1">
    <location>
        <position position="27"/>
    </location>
    <ligand>
        <name>ATP</name>
        <dbReference type="ChEBI" id="CHEBI:30616"/>
    </ligand>
</feature>
<feature type="binding site" evidence="1">
    <location>
        <position position="27"/>
    </location>
    <ligand>
        <name>CTP</name>
        <dbReference type="ChEBI" id="CHEBI:37563"/>
    </ligand>
</feature>
<feature type="binding site" evidence="1">
    <location>
        <position position="30"/>
    </location>
    <ligand>
        <name>ATP</name>
        <dbReference type="ChEBI" id="CHEBI:30616"/>
    </ligand>
</feature>
<feature type="binding site" evidence="1">
    <location>
        <position position="30"/>
    </location>
    <ligand>
        <name>CTP</name>
        <dbReference type="ChEBI" id="CHEBI:37563"/>
    </ligand>
</feature>
<feature type="binding site" evidence="1">
    <location>
        <position position="40"/>
    </location>
    <ligand>
        <name>Mg(2+)</name>
        <dbReference type="ChEBI" id="CHEBI:18420"/>
    </ligand>
</feature>
<feature type="binding site" evidence="1">
    <location>
        <position position="42"/>
    </location>
    <ligand>
        <name>Mg(2+)</name>
        <dbReference type="ChEBI" id="CHEBI:18420"/>
    </ligand>
</feature>
<feature type="binding site" evidence="1">
    <location>
        <position position="111"/>
    </location>
    <ligand>
        <name>ATP</name>
        <dbReference type="ChEBI" id="CHEBI:30616"/>
    </ligand>
</feature>
<feature type="binding site" evidence="1">
    <location>
        <position position="111"/>
    </location>
    <ligand>
        <name>CTP</name>
        <dbReference type="ChEBI" id="CHEBI:37563"/>
    </ligand>
</feature>
<feature type="binding site" evidence="1">
    <location>
        <position position="154"/>
    </location>
    <ligand>
        <name>ATP</name>
        <dbReference type="ChEBI" id="CHEBI:30616"/>
    </ligand>
</feature>
<feature type="binding site" evidence="1">
    <location>
        <position position="154"/>
    </location>
    <ligand>
        <name>CTP</name>
        <dbReference type="ChEBI" id="CHEBI:37563"/>
    </ligand>
</feature>
<feature type="binding site" evidence="1">
    <location>
        <position position="157"/>
    </location>
    <ligand>
        <name>ATP</name>
        <dbReference type="ChEBI" id="CHEBI:30616"/>
    </ligand>
</feature>
<feature type="binding site" evidence="1">
    <location>
        <position position="157"/>
    </location>
    <ligand>
        <name>CTP</name>
        <dbReference type="ChEBI" id="CHEBI:37563"/>
    </ligand>
</feature>
<feature type="binding site" evidence="1">
    <location>
        <position position="160"/>
    </location>
    <ligand>
        <name>ATP</name>
        <dbReference type="ChEBI" id="CHEBI:30616"/>
    </ligand>
</feature>
<feature type="binding site" evidence="1">
    <location>
        <position position="160"/>
    </location>
    <ligand>
        <name>CTP</name>
        <dbReference type="ChEBI" id="CHEBI:37563"/>
    </ligand>
</feature>
<feature type="binding site" evidence="1">
    <location>
        <position position="163"/>
    </location>
    <ligand>
        <name>ATP</name>
        <dbReference type="ChEBI" id="CHEBI:30616"/>
    </ligand>
</feature>
<feature type="binding site" evidence="1">
    <location>
        <position position="163"/>
    </location>
    <ligand>
        <name>CTP</name>
        <dbReference type="ChEBI" id="CHEBI:37563"/>
    </ligand>
</feature>